<sequence length="189" mass="20638">MDRLKKSLLEAPIIEKEGYHYFVHPISDGVPMLRPELLREIVIKIIRKAELDDVDKIVTPAAMGIHISTAVSLMTDIPLVVVRKRQYGLDGEVSLSQVTGYSESEMYVNDVYEGDQVLVLDDVLSTGGTLAGLTGALEDIGADIRDIVCVIKKADGTNKLDEAGYDAKTLINVQVIDGEVTIVDEHGDD</sequence>
<feature type="chain" id="PRO_0000149494" description="HGPRTase-like protein 2">
    <location>
        <begin position="1"/>
        <end position="189"/>
    </location>
</feature>
<name>HPRL2_HALMA</name>
<accession>Q5UX13</accession>
<gene>
    <name type="ordered locus">rrnAC3523</name>
</gene>
<reference key="1">
    <citation type="journal article" date="2004" name="Genome Res.">
        <title>Genome sequence of Haloarcula marismortui: a halophilic archaeon from the Dead Sea.</title>
        <authorList>
            <person name="Baliga N.S."/>
            <person name="Bonneau R."/>
            <person name="Facciotti M.T."/>
            <person name="Pan M."/>
            <person name="Glusman G."/>
            <person name="Deutsch E.W."/>
            <person name="Shannon P."/>
            <person name="Chiu Y."/>
            <person name="Weng R.S."/>
            <person name="Gan R.R."/>
            <person name="Hung P."/>
            <person name="Date S.V."/>
            <person name="Marcotte E."/>
            <person name="Hood L."/>
            <person name="Ng W.V."/>
        </authorList>
    </citation>
    <scope>NUCLEOTIDE SEQUENCE [LARGE SCALE GENOMIC DNA]</scope>
    <source>
        <strain>ATCC 43049 / DSM 3752 / JCM 8966 / VKM B-1809</strain>
    </source>
</reference>
<evidence type="ECO:0000255" key="1">
    <source>
        <dbReference type="HAMAP-Rule" id="MF_01467"/>
    </source>
</evidence>
<comment type="function">
    <text evidence="1">May catalyze a purine salvage reaction, the substrate is unknown.</text>
</comment>
<comment type="similarity">
    <text evidence="1">Belongs to the purine/pyrimidine phosphoribosyltransferase family. Archaeal HPRT subfamily.</text>
</comment>
<organism>
    <name type="scientific">Haloarcula marismortui (strain ATCC 43049 / DSM 3752 / JCM 8966 / VKM B-1809)</name>
    <name type="common">Halobacterium marismortui</name>
    <dbReference type="NCBI Taxonomy" id="272569"/>
    <lineage>
        <taxon>Archaea</taxon>
        <taxon>Methanobacteriati</taxon>
        <taxon>Methanobacteriota</taxon>
        <taxon>Stenosarchaea group</taxon>
        <taxon>Halobacteria</taxon>
        <taxon>Halobacteriales</taxon>
        <taxon>Haloarculaceae</taxon>
        <taxon>Haloarcula</taxon>
    </lineage>
</organism>
<proteinExistence type="inferred from homology"/>
<keyword id="KW-0660">Purine salvage</keyword>
<keyword id="KW-1185">Reference proteome</keyword>
<keyword id="KW-0808">Transferase</keyword>
<protein>
    <recommendedName>
        <fullName evidence="1">HGPRTase-like protein 2</fullName>
        <ecNumber evidence="1">2.4.2.-</ecNumber>
    </recommendedName>
</protein>
<dbReference type="EC" id="2.4.2.-" evidence="1"/>
<dbReference type="EMBL" id="AY596297">
    <property type="protein sequence ID" value="AAV48190.1"/>
    <property type="molecule type" value="Genomic_DNA"/>
</dbReference>
<dbReference type="SMR" id="Q5UX13"/>
<dbReference type="STRING" id="272569.rrnAC3523"/>
<dbReference type="PaxDb" id="272569-rrnAC3523"/>
<dbReference type="EnsemblBacteria" id="AAV48190">
    <property type="protein sequence ID" value="AAV48190"/>
    <property type="gene ID" value="rrnAC3523"/>
</dbReference>
<dbReference type="KEGG" id="hma:rrnAC3523"/>
<dbReference type="PATRIC" id="fig|272569.17.peg.4027"/>
<dbReference type="eggNOG" id="arCOG00030">
    <property type="taxonomic scope" value="Archaea"/>
</dbReference>
<dbReference type="HOGENOM" id="CLU_126376_0_0_2"/>
<dbReference type="Proteomes" id="UP000001169">
    <property type="component" value="Chromosome I"/>
</dbReference>
<dbReference type="GO" id="GO:0016740">
    <property type="term" value="F:transferase activity"/>
    <property type="evidence" value="ECO:0007669"/>
    <property type="project" value="UniProtKB-KW"/>
</dbReference>
<dbReference type="GO" id="GO:0006166">
    <property type="term" value="P:purine ribonucleoside salvage"/>
    <property type="evidence" value="ECO:0007669"/>
    <property type="project" value="UniProtKB-KW"/>
</dbReference>
<dbReference type="CDD" id="cd06223">
    <property type="entry name" value="PRTases_typeI"/>
    <property type="match status" value="1"/>
</dbReference>
<dbReference type="Gene3D" id="3.40.50.2020">
    <property type="match status" value="1"/>
</dbReference>
<dbReference type="HAMAP" id="MF_01467">
    <property type="entry name" value="Hypx_phosphoribosyltr"/>
    <property type="match status" value="1"/>
</dbReference>
<dbReference type="InterPro" id="IPR026597">
    <property type="entry name" value="HGPRTase-like"/>
</dbReference>
<dbReference type="InterPro" id="IPR000836">
    <property type="entry name" value="PRibTrfase_dom"/>
</dbReference>
<dbReference type="InterPro" id="IPR029057">
    <property type="entry name" value="PRTase-like"/>
</dbReference>
<dbReference type="InterPro" id="IPR050118">
    <property type="entry name" value="Pur/Pyrimidine_PRTase"/>
</dbReference>
<dbReference type="NCBIfam" id="NF040646">
    <property type="entry name" value="HPT_Archaea"/>
    <property type="match status" value="1"/>
</dbReference>
<dbReference type="NCBIfam" id="NF002635">
    <property type="entry name" value="PRK02304.1-4"/>
    <property type="match status" value="1"/>
</dbReference>
<dbReference type="PANTHER" id="PTHR43864">
    <property type="entry name" value="HYPOXANTHINE/GUANINE PHOSPHORIBOSYLTRANSFERASE"/>
    <property type="match status" value="1"/>
</dbReference>
<dbReference type="PANTHER" id="PTHR43864:SF1">
    <property type="entry name" value="XANTHINE PHOSPHORIBOSYLTRANSFERASE"/>
    <property type="match status" value="1"/>
</dbReference>
<dbReference type="Pfam" id="PF00156">
    <property type="entry name" value="Pribosyltran"/>
    <property type="match status" value="1"/>
</dbReference>
<dbReference type="SUPFAM" id="SSF53271">
    <property type="entry name" value="PRTase-like"/>
    <property type="match status" value="1"/>
</dbReference>
<dbReference type="PROSITE" id="PS00103">
    <property type="entry name" value="PUR_PYR_PR_TRANSFER"/>
    <property type="match status" value="1"/>
</dbReference>